<accession>Q91790</accession>
<accession>Q90W59</accession>
<reference key="1">
    <citation type="journal article" date="1995" name="J. Cell Sci.">
        <title>XCL100, an inducible nuclear MAP kinase phosphatase from Xenopus laevis: its role in MAP kinase inactivation in differentiated cells and its expression during early development.</title>
        <authorList>
            <person name="Lewis T."/>
            <person name="Groom L.A."/>
            <person name="Sneddon A.A."/>
            <person name="Smythe C."/>
            <person name="Keyse S.M."/>
        </authorList>
    </citation>
    <scope>NUCLEOTIDE SEQUENCE [MRNA]</scope>
    <scope>FUNCTION</scope>
    <scope>CATALYTIC ACTIVITY</scope>
    <scope>SUBCELLULAR LOCATION</scope>
    <scope>TISSUE SPECIFICITY</scope>
    <scope>DEVELOPMENTAL STAGE</scope>
    <scope>INDUCTION</scope>
    <source>
        <tissue evidence="6">Embryonic kidney</tissue>
    </source>
</reference>
<reference key="2">
    <citation type="journal article" date="2002" name="Mol. Biol. Cell">
        <title>Activation of p42 mitogen-activated protein kinase (MAPK), but not c-Jun NH(2)-terminal kinase, induces phosphorylation and stabilization of MAPK phosphatase XCL100 in Xenopus oocytes.</title>
        <authorList>
            <person name="Sohaskey M.L."/>
            <person name="Ferrell J.E. Jr."/>
        </authorList>
    </citation>
    <scope>NUCLEOTIDE SEQUENCE [MRNA]</scope>
    <scope>FUNCTION</scope>
    <scope>CATALYTIC ACTIVITY</scope>
    <scope>PHOSPHORYLATION AT THR-168</scope>
    <scope>PHOSPHORYLATION AT SERINE RESIDUES</scope>
    <scope>MUTAGENESIS OF THR-168 AND CYS-260</scope>
    <source>
        <tissue evidence="10">Ovary</tissue>
    </source>
</reference>
<evidence type="ECO:0000255" key="1"/>
<evidence type="ECO:0000255" key="2">
    <source>
        <dbReference type="PROSITE-ProRule" id="PRU00160"/>
    </source>
</evidence>
<evidence type="ECO:0000255" key="3">
    <source>
        <dbReference type="PROSITE-ProRule" id="PRU00173"/>
    </source>
</evidence>
<evidence type="ECO:0000255" key="4">
    <source>
        <dbReference type="PROSITE-ProRule" id="PRU10044"/>
    </source>
</evidence>
<evidence type="ECO:0000269" key="5">
    <source>
    </source>
</evidence>
<evidence type="ECO:0000269" key="6">
    <source>
    </source>
</evidence>
<evidence type="ECO:0000303" key="7">
    <source>
    </source>
</evidence>
<evidence type="ECO:0000303" key="8">
    <source>
    </source>
</evidence>
<evidence type="ECO:0000305" key="9"/>
<evidence type="ECO:0000312" key="10">
    <source>
        <dbReference type="EMBL" id="CAC44126.1"/>
    </source>
</evidence>
<evidence type="ECO:0000312" key="11">
    <source>
        <dbReference type="Xenbase" id="XB-GENE-975062"/>
    </source>
</evidence>
<sequence>MVNMETCAMDCCVLKALLAERAHKCLILDCRSFFSFSSCSIVGSSNVRLSTIVKRRAKGSMGLEHIVPNEEQRCRLVAGMYEAVVLLDERTSELDMLRKDSTMMLAVNALCRDSRGSSIYFLKGGYETFSAQCPEFCTKNSPPVGLSLPLCANNVPGSADSNCTPCGTPLYDQGGPVEILPFLYLGSAYHASRKDMLDTLGITALINVSANCPNHFEGHFQYKSIPVEDSHKADISSWFNEAIDFIDSVKNSGGRVFVHCQAGISRSATICLAYLMRTNRVKLDEAFEFVKQRRSIISPNFSFMGQLLQFESQVLAPSCSAEAGSPTISVLDRGTSTTTVFNFPVSIPVHSGANSLSYLQNPITTSPSC</sequence>
<protein>
    <recommendedName>
        <fullName evidence="9">Dual specificity protein phosphatase 1-A</fullName>
        <ecNumber evidence="5 6">3.1.3.16</ecNumber>
        <ecNumber evidence="5 6">3.1.3.48</ecNumber>
    </recommendedName>
    <alternativeName>
        <fullName evidence="8">XCL100</fullName>
    </alternativeName>
    <alternativeName>
        <fullName evidence="7">XCL100-alfa</fullName>
    </alternativeName>
</protein>
<keyword id="KW-0378">Hydrolase</keyword>
<keyword id="KW-0469">Meiosis</keyword>
<keyword id="KW-0539">Nucleus</keyword>
<keyword id="KW-0597">Phosphoprotein</keyword>
<keyword id="KW-0904">Protein phosphatase</keyword>
<keyword id="KW-1185">Reference proteome</keyword>
<keyword id="KW-0346">Stress response</keyword>
<organism>
    <name type="scientific">Xenopus laevis</name>
    <name type="common">African clawed frog</name>
    <dbReference type="NCBI Taxonomy" id="8355"/>
    <lineage>
        <taxon>Eukaryota</taxon>
        <taxon>Metazoa</taxon>
        <taxon>Chordata</taxon>
        <taxon>Craniata</taxon>
        <taxon>Vertebrata</taxon>
        <taxon>Euteleostomi</taxon>
        <taxon>Amphibia</taxon>
        <taxon>Batrachia</taxon>
        <taxon>Anura</taxon>
        <taxon>Pipoidea</taxon>
        <taxon>Pipidae</taxon>
        <taxon>Xenopodinae</taxon>
        <taxon>Xenopus</taxon>
        <taxon>Xenopus</taxon>
    </lineage>
</organism>
<dbReference type="EC" id="3.1.3.16" evidence="5 6"/>
<dbReference type="EC" id="3.1.3.48" evidence="5 6"/>
<dbReference type="EMBL" id="X83742">
    <property type="protein sequence ID" value="CAA58710.1"/>
    <property type="molecule type" value="mRNA"/>
</dbReference>
<dbReference type="EMBL" id="AJ320158">
    <property type="protein sequence ID" value="CAC44126.1"/>
    <property type="molecule type" value="mRNA"/>
</dbReference>
<dbReference type="RefSeq" id="NP_001080570.1">
    <property type="nucleotide sequence ID" value="NM_001087101.1"/>
</dbReference>
<dbReference type="SMR" id="Q91790"/>
<dbReference type="iPTMnet" id="Q91790"/>
<dbReference type="GeneID" id="380262"/>
<dbReference type="KEGG" id="xla:380262"/>
<dbReference type="AGR" id="Xenbase:XB-GENE-975062"/>
<dbReference type="CTD" id="380262"/>
<dbReference type="Xenbase" id="XB-GENE-975062">
    <property type="gene designation" value="dusp1.L"/>
</dbReference>
<dbReference type="OMA" id="MVNMQVC"/>
<dbReference type="OrthoDB" id="165342at2759"/>
<dbReference type="Proteomes" id="UP000186698">
    <property type="component" value="Chromosome 3L"/>
</dbReference>
<dbReference type="Bgee" id="380262">
    <property type="expression patterns" value="Expressed in kidney and 19 other cell types or tissues"/>
</dbReference>
<dbReference type="GO" id="GO:0005737">
    <property type="term" value="C:cytoplasm"/>
    <property type="evidence" value="ECO:0000314"/>
    <property type="project" value="UniProtKB"/>
</dbReference>
<dbReference type="GO" id="GO:0005634">
    <property type="term" value="C:nucleus"/>
    <property type="evidence" value="ECO:0000314"/>
    <property type="project" value="UniProtKB"/>
</dbReference>
<dbReference type="GO" id="GO:0017017">
    <property type="term" value="F:MAP kinase tyrosine/serine/threonine phosphatase activity"/>
    <property type="evidence" value="ECO:0000315"/>
    <property type="project" value="UniProtKB"/>
</dbReference>
<dbReference type="GO" id="GO:0004721">
    <property type="term" value="F:phosphoprotein phosphatase activity"/>
    <property type="evidence" value="ECO:0000318"/>
    <property type="project" value="GO_Central"/>
</dbReference>
<dbReference type="GO" id="GO:0004722">
    <property type="term" value="F:protein serine/threonine phosphatase activity"/>
    <property type="evidence" value="ECO:0000250"/>
    <property type="project" value="UniProtKB"/>
</dbReference>
<dbReference type="GO" id="GO:0004725">
    <property type="term" value="F:protein tyrosine phosphatase activity"/>
    <property type="evidence" value="ECO:0000250"/>
    <property type="project" value="UniProtKB"/>
</dbReference>
<dbReference type="GO" id="GO:0001706">
    <property type="term" value="P:endoderm formation"/>
    <property type="evidence" value="ECO:0000318"/>
    <property type="project" value="GO_Central"/>
</dbReference>
<dbReference type="GO" id="GO:0051321">
    <property type="term" value="P:meiotic cell cycle"/>
    <property type="evidence" value="ECO:0007669"/>
    <property type="project" value="UniProtKB-KW"/>
</dbReference>
<dbReference type="GO" id="GO:0043409">
    <property type="term" value="P:negative regulation of MAPK cascade"/>
    <property type="evidence" value="ECO:0000315"/>
    <property type="project" value="UniProtKB"/>
</dbReference>
<dbReference type="GO" id="GO:0051447">
    <property type="term" value="P:negative regulation of meiotic cell cycle"/>
    <property type="evidence" value="ECO:0000315"/>
    <property type="project" value="UniProtKB"/>
</dbReference>
<dbReference type="GO" id="GO:1903753">
    <property type="term" value="P:negative regulation of p38MAPK cascade"/>
    <property type="evidence" value="ECO:0000318"/>
    <property type="project" value="GO_Central"/>
</dbReference>
<dbReference type="GO" id="GO:0070262">
    <property type="term" value="P:peptidyl-serine dephosphorylation"/>
    <property type="evidence" value="ECO:0000250"/>
    <property type="project" value="UniProtKB"/>
</dbReference>
<dbReference type="GO" id="GO:0035970">
    <property type="term" value="P:peptidyl-threonine dephosphorylation"/>
    <property type="evidence" value="ECO:0000314"/>
    <property type="project" value="UniProtKB"/>
</dbReference>
<dbReference type="GO" id="GO:0035335">
    <property type="term" value="P:peptidyl-tyrosine dephosphorylation"/>
    <property type="evidence" value="ECO:0000314"/>
    <property type="project" value="UniProtKB"/>
</dbReference>
<dbReference type="GO" id="GO:0090266">
    <property type="term" value="P:regulation of mitotic cell cycle spindle assembly checkpoint"/>
    <property type="evidence" value="ECO:0000315"/>
    <property type="project" value="UniProtKB"/>
</dbReference>
<dbReference type="GO" id="GO:0007165">
    <property type="term" value="P:signal transduction"/>
    <property type="evidence" value="ECO:0000318"/>
    <property type="project" value="GO_Central"/>
</dbReference>
<dbReference type="CDD" id="cd14638">
    <property type="entry name" value="DSP_DUSP1"/>
    <property type="match status" value="1"/>
</dbReference>
<dbReference type="CDD" id="cd01446">
    <property type="entry name" value="DSP_MapKP"/>
    <property type="match status" value="1"/>
</dbReference>
<dbReference type="FunFam" id="3.90.190.10:FF:000015">
    <property type="entry name" value="Dual specificity phosphatase 4"/>
    <property type="match status" value="1"/>
</dbReference>
<dbReference type="FunFam" id="3.40.250.10:FF:000026">
    <property type="entry name" value="Dual specificity protein phosphatase"/>
    <property type="match status" value="1"/>
</dbReference>
<dbReference type="Gene3D" id="3.90.190.10">
    <property type="entry name" value="Protein tyrosine phosphatase superfamily"/>
    <property type="match status" value="1"/>
</dbReference>
<dbReference type="Gene3D" id="3.40.250.10">
    <property type="entry name" value="Rhodanese-like domain"/>
    <property type="match status" value="1"/>
</dbReference>
<dbReference type="InterPro" id="IPR020420">
    <property type="entry name" value="Atypical_DUSP_subfamB"/>
</dbReference>
<dbReference type="InterPro" id="IPR000340">
    <property type="entry name" value="Dual-sp_phosphatase_cat-dom"/>
</dbReference>
<dbReference type="InterPro" id="IPR008343">
    <property type="entry name" value="MKP"/>
</dbReference>
<dbReference type="InterPro" id="IPR029021">
    <property type="entry name" value="Prot-tyrosine_phosphatase-like"/>
</dbReference>
<dbReference type="InterPro" id="IPR001763">
    <property type="entry name" value="Rhodanese-like_dom"/>
</dbReference>
<dbReference type="InterPro" id="IPR036873">
    <property type="entry name" value="Rhodanese-like_dom_sf"/>
</dbReference>
<dbReference type="InterPro" id="IPR016130">
    <property type="entry name" value="Tyr_Pase_AS"/>
</dbReference>
<dbReference type="InterPro" id="IPR003595">
    <property type="entry name" value="Tyr_Pase_cat"/>
</dbReference>
<dbReference type="InterPro" id="IPR000387">
    <property type="entry name" value="Tyr_Pase_dom"/>
</dbReference>
<dbReference type="InterPro" id="IPR020422">
    <property type="entry name" value="TYR_PHOSPHATASE_DUAL_dom"/>
</dbReference>
<dbReference type="PANTHER" id="PTHR10159">
    <property type="entry name" value="DUAL SPECIFICITY PROTEIN PHOSPHATASE"/>
    <property type="match status" value="1"/>
</dbReference>
<dbReference type="PANTHER" id="PTHR10159:SF309">
    <property type="entry name" value="DUAL SPECIFICITY PROTEIN PHOSPHATASE 1"/>
    <property type="match status" value="1"/>
</dbReference>
<dbReference type="Pfam" id="PF00782">
    <property type="entry name" value="DSPc"/>
    <property type="match status" value="1"/>
</dbReference>
<dbReference type="PIRSF" id="PIRSF000939">
    <property type="entry name" value="MAPK_Ptase"/>
    <property type="match status" value="1"/>
</dbReference>
<dbReference type="PRINTS" id="PR01908">
    <property type="entry name" value="ADSPHPHTASE"/>
</dbReference>
<dbReference type="PRINTS" id="PR01910">
    <property type="entry name" value="ADSPHPHTASEB"/>
</dbReference>
<dbReference type="PRINTS" id="PR01764">
    <property type="entry name" value="MAPKPHPHTASE"/>
</dbReference>
<dbReference type="SMART" id="SM00195">
    <property type="entry name" value="DSPc"/>
    <property type="match status" value="1"/>
</dbReference>
<dbReference type="SMART" id="SM00404">
    <property type="entry name" value="PTPc_motif"/>
    <property type="match status" value="1"/>
</dbReference>
<dbReference type="SMART" id="SM00450">
    <property type="entry name" value="RHOD"/>
    <property type="match status" value="1"/>
</dbReference>
<dbReference type="SUPFAM" id="SSF52799">
    <property type="entry name" value="(Phosphotyrosine protein) phosphatases II"/>
    <property type="match status" value="1"/>
</dbReference>
<dbReference type="SUPFAM" id="SSF52821">
    <property type="entry name" value="Rhodanese/Cell cycle control phosphatase"/>
    <property type="match status" value="1"/>
</dbReference>
<dbReference type="PROSITE" id="PS50206">
    <property type="entry name" value="RHODANESE_3"/>
    <property type="match status" value="1"/>
</dbReference>
<dbReference type="PROSITE" id="PS00383">
    <property type="entry name" value="TYR_PHOSPHATASE_1"/>
    <property type="match status" value="1"/>
</dbReference>
<dbReference type="PROSITE" id="PS50056">
    <property type="entry name" value="TYR_PHOSPHATASE_2"/>
    <property type="match status" value="1"/>
</dbReference>
<dbReference type="PROSITE" id="PS50054">
    <property type="entry name" value="TYR_PHOSPHATASE_DUAL"/>
    <property type="match status" value="1"/>
</dbReference>
<gene>
    <name evidence="11" type="primary">dusp1-a</name>
</gene>
<proteinExistence type="evidence at protein level"/>
<feature type="chain" id="PRO_0000421473" description="Dual specificity protein phosphatase 1-A">
    <location>
        <begin position="1"/>
        <end position="369"/>
    </location>
</feature>
<feature type="domain" description="Rhodanese" evidence="3">
    <location>
        <begin position="21"/>
        <end position="138"/>
    </location>
</feature>
<feature type="domain" description="Tyrosine-protein phosphatase" evidence="2">
    <location>
        <begin position="175"/>
        <end position="316"/>
    </location>
</feature>
<feature type="active site" description="Phosphocysteine intermediate" evidence="2">
    <location>
        <position position="260"/>
    </location>
</feature>
<feature type="modified residue" description="Phosphothreonine; by MAPK1" evidence="5">
    <location>
        <position position="168"/>
    </location>
</feature>
<feature type="mutagenesis site" description="Abolishes threonine phosphorylation; when associated with S-260. No effect on phosphatase activity and MAPK1 binding; when associated with S-260." evidence="5">
    <original>T</original>
    <variation>E</variation>
    <location>
        <position position="168"/>
    </location>
</feature>
<feature type="mutagenesis site" description="Abolishes threonine phosphorylation; when associated with S-260. No effect on phosphatase activity and MAPK1 binding; when associated with S-260." evidence="5">
    <original>T</original>
    <variation>V</variation>
    <location>
        <position position="168"/>
    </location>
</feature>
<feature type="mutagenesis site" description="Loss of phosphatase activity. Increases stability. Enables stable complex formation with active MAPK1. Abolishes threonine phosphorylation; when associated with E-168 or V-168. No effect on phosphatase activity and MAPK1 binding; when associated with E-168 or V-168." evidence="5">
    <original>C</original>
    <variation>S</variation>
    <location>
        <position position="260"/>
    </location>
</feature>
<comment type="function">
    <text evidence="5 6">Dual specificity phosphatase that dephosphorylates MAP kinase MAPK1/ERK2 on both 'Thr-188' and 'Tyr-190', regulating its activity during the meiotic cell cycle.</text>
</comment>
<comment type="catalytic activity">
    <reaction evidence="5 6">
        <text>O-phospho-L-seryl-[protein] + H2O = L-seryl-[protein] + phosphate</text>
        <dbReference type="Rhea" id="RHEA:20629"/>
        <dbReference type="Rhea" id="RHEA-COMP:9863"/>
        <dbReference type="Rhea" id="RHEA-COMP:11604"/>
        <dbReference type="ChEBI" id="CHEBI:15377"/>
        <dbReference type="ChEBI" id="CHEBI:29999"/>
        <dbReference type="ChEBI" id="CHEBI:43474"/>
        <dbReference type="ChEBI" id="CHEBI:83421"/>
        <dbReference type="EC" id="3.1.3.16"/>
    </reaction>
</comment>
<comment type="catalytic activity">
    <reaction evidence="5 6">
        <text>O-phospho-L-threonyl-[protein] + H2O = L-threonyl-[protein] + phosphate</text>
        <dbReference type="Rhea" id="RHEA:47004"/>
        <dbReference type="Rhea" id="RHEA-COMP:11060"/>
        <dbReference type="Rhea" id="RHEA-COMP:11605"/>
        <dbReference type="ChEBI" id="CHEBI:15377"/>
        <dbReference type="ChEBI" id="CHEBI:30013"/>
        <dbReference type="ChEBI" id="CHEBI:43474"/>
        <dbReference type="ChEBI" id="CHEBI:61977"/>
        <dbReference type="EC" id="3.1.3.16"/>
    </reaction>
</comment>
<comment type="catalytic activity">
    <reaction evidence="4 5 6">
        <text>O-phospho-L-tyrosyl-[protein] + H2O = L-tyrosyl-[protein] + phosphate</text>
        <dbReference type="Rhea" id="RHEA:10684"/>
        <dbReference type="Rhea" id="RHEA-COMP:10136"/>
        <dbReference type="Rhea" id="RHEA-COMP:20101"/>
        <dbReference type="ChEBI" id="CHEBI:15377"/>
        <dbReference type="ChEBI" id="CHEBI:43474"/>
        <dbReference type="ChEBI" id="CHEBI:46858"/>
        <dbReference type="ChEBI" id="CHEBI:61978"/>
        <dbReference type="EC" id="3.1.3.48"/>
    </reaction>
</comment>
<comment type="subcellular location">
    <subcellularLocation>
        <location evidence="6">Nucleus</location>
    </subcellularLocation>
</comment>
<comment type="tissue specificity">
    <text evidence="6">Expressed in XIK-2 kidney cells.</text>
</comment>
<comment type="developmental stage">
    <text evidence="6">Present in both immature and mature oocytes (at protein level). Expressed at a constant level during oocyte growth as well as during oocyte maturation. Levels decline somewhat during cleavage (stages 3-6). Levels rise dramatically during the mid-blastula transition. This higher level of expression is then maintained through gastrulation and all subsequent developmental stages.</text>
</comment>
<comment type="induction">
    <text evidence="6">By serum stimulation, heat shock and oxidative stress.</text>
</comment>
<comment type="PTM">
    <text evidence="5">Phosphorylated by MAPK1/ERK2 at Thr-168 and at one or more serine residues in a progesterone-dependent manner. Phosphorylation reduces its rate of degradation but does not seem to affect phosphatase activity.</text>
</comment>
<comment type="similarity">
    <text evidence="1">Belongs to the protein-tyrosine phosphatase family. Non-receptor class dual specificity subfamily.</text>
</comment>
<name>DUS1A_XENLA</name>